<comment type="function">
    <text evidence="2">Interconverts simultaneously and stereospecifically pyruvate and lactate with concomitant interconversion of NADH and NAD(+).</text>
</comment>
<comment type="catalytic activity">
    <reaction evidence="2">
        <text>(S)-lactate + NAD(+) = pyruvate + NADH + H(+)</text>
        <dbReference type="Rhea" id="RHEA:23444"/>
        <dbReference type="ChEBI" id="CHEBI:15361"/>
        <dbReference type="ChEBI" id="CHEBI:15378"/>
        <dbReference type="ChEBI" id="CHEBI:16651"/>
        <dbReference type="ChEBI" id="CHEBI:57540"/>
        <dbReference type="ChEBI" id="CHEBI:57945"/>
        <dbReference type="EC" id="1.1.1.27"/>
    </reaction>
    <physiologicalReaction direction="left-to-right" evidence="2">
        <dbReference type="Rhea" id="RHEA:23445"/>
    </physiologicalReaction>
    <physiologicalReaction direction="right-to-left" evidence="2">
        <dbReference type="Rhea" id="RHEA:23446"/>
    </physiologicalReaction>
</comment>
<comment type="pathway">
    <text evidence="2">Fermentation; pyruvate fermentation to lactate; (S)-lactate from pyruvate: step 1/1.</text>
</comment>
<comment type="subunit">
    <text evidence="1">Homotetramer.</text>
</comment>
<comment type="subcellular location">
    <subcellularLocation>
        <location evidence="1">Cytoplasm</location>
    </subcellularLocation>
</comment>
<comment type="similarity">
    <text evidence="3">Belongs to the LDH/MDH superfamily. LDH family.</text>
</comment>
<organism>
    <name type="scientific">Sphyraena argentea</name>
    <name type="common">Pacific barracuda</name>
    <dbReference type="NCBI Taxonomy" id="55125"/>
    <lineage>
        <taxon>Eukaryota</taxon>
        <taxon>Metazoa</taxon>
        <taxon>Chordata</taxon>
        <taxon>Craniata</taxon>
        <taxon>Vertebrata</taxon>
        <taxon>Euteleostomi</taxon>
        <taxon>Actinopterygii</taxon>
        <taxon>Neopterygii</taxon>
        <taxon>Teleostei</taxon>
        <taxon>Neoteleostei</taxon>
        <taxon>Acanthomorphata</taxon>
        <taxon>Carangaria</taxon>
        <taxon>Carangaria incertae sedis</taxon>
        <taxon>Sphyraenidae</taxon>
        <taxon>Sphyraena</taxon>
    </lineage>
</organism>
<reference key="1">
    <citation type="journal article" date="1997" name="Biochemistry">
        <title>Evolution of lactate dehydrogenase-A homologs of barracuda fishes (genus Sphyraena) from different thermal environments: differences in kinetic properties and thermal stability are due to amino acid substitutions outside the active site.</title>
        <authorList>
            <person name="Holland L.Z."/>
            <person name="McFall-Ngai M."/>
            <person name="Somero G.N."/>
        </authorList>
    </citation>
    <scope>NUCLEOTIDE SEQUENCE [MRNA]</scope>
    <source>
        <tissue>Skeletal muscle</tissue>
    </source>
</reference>
<sequence>MSTKEKLIGHVMKEEPIGSRNKVTVVGVGMVGMASAVSILLKDLCDELALVDVMEDKLKGEAMDLQHGSLFLKTHKIVADKDYSVTANSRVVVVTAGARQQEGESRLNLVQRNVNIFKFIIPNIVKYSPNCILMVVSNPVDILTYVAWKLSGFPRHRVIGSGTNLDSARFRHIMGEKLHLHPSSCHGWIVGEHGDSSVPVWSGVNVAGVSLQTLNPKMGAEGDSENWKAVHKMVVDGAYEVIKLKGYTSWAIGMSVADLVESIVKNCTKCTQCPRWSRGMHGVKDEVFLSVPCVLGNSGLTDVIHMTLKPEEEKQLVKSAETLWGVQKELTL</sequence>
<dbReference type="EC" id="1.1.1.27" evidence="2"/>
<dbReference type="EMBL" id="U80000">
    <property type="protein sequence ID" value="AAB38886.1"/>
    <property type="molecule type" value="mRNA"/>
</dbReference>
<dbReference type="SMR" id="O13276"/>
<dbReference type="BRENDA" id="1.1.1.27">
    <property type="organism ID" value="5804"/>
</dbReference>
<dbReference type="SABIO-RK" id="O13276"/>
<dbReference type="UniPathway" id="UPA00554">
    <property type="reaction ID" value="UER00611"/>
</dbReference>
<dbReference type="GO" id="GO:0005737">
    <property type="term" value="C:cytoplasm"/>
    <property type="evidence" value="ECO:0007669"/>
    <property type="project" value="UniProtKB-SubCell"/>
</dbReference>
<dbReference type="GO" id="GO:0004459">
    <property type="term" value="F:L-lactate dehydrogenase activity"/>
    <property type="evidence" value="ECO:0007669"/>
    <property type="project" value="UniProtKB-EC"/>
</dbReference>
<dbReference type="GO" id="GO:0006089">
    <property type="term" value="P:lactate metabolic process"/>
    <property type="evidence" value="ECO:0007669"/>
    <property type="project" value="TreeGrafter"/>
</dbReference>
<dbReference type="CDD" id="cd05293">
    <property type="entry name" value="LDH_1"/>
    <property type="match status" value="1"/>
</dbReference>
<dbReference type="FunFam" id="3.40.50.720:FF:000029">
    <property type="entry name" value="L-lactate dehydrogenase A chain"/>
    <property type="match status" value="1"/>
</dbReference>
<dbReference type="FunFam" id="3.90.110.10:FF:000003">
    <property type="entry name" value="L-lactate dehydrogenase A chain"/>
    <property type="match status" value="1"/>
</dbReference>
<dbReference type="Gene3D" id="3.90.110.10">
    <property type="entry name" value="Lactate dehydrogenase/glycoside hydrolase, family 4, C-terminal"/>
    <property type="match status" value="1"/>
</dbReference>
<dbReference type="Gene3D" id="3.40.50.720">
    <property type="entry name" value="NAD(P)-binding Rossmann-like Domain"/>
    <property type="match status" value="1"/>
</dbReference>
<dbReference type="HAMAP" id="MF_00488">
    <property type="entry name" value="Lactate_dehydrog"/>
    <property type="match status" value="1"/>
</dbReference>
<dbReference type="InterPro" id="IPR001557">
    <property type="entry name" value="L-lactate/malate_DH"/>
</dbReference>
<dbReference type="InterPro" id="IPR011304">
    <property type="entry name" value="L-lactate_DH"/>
</dbReference>
<dbReference type="InterPro" id="IPR018177">
    <property type="entry name" value="L-lactate_DH_AS"/>
</dbReference>
<dbReference type="InterPro" id="IPR022383">
    <property type="entry name" value="Lactate/malate_DH_C"/>
</dbReference>
<dbReference type="InterPro" id="IPR001236">
    <property type="entry name" value="Lactate/malate_DH_N"/>
</dbReference>
<dbReference type="InterPro" id="IPR015955">
    <property type="entry name" value="Lactate_DH/Glyco_Ohase_4_C"/>
</dbReference>
<dbReference type="InterPro" id="IPR036291">
    <property type="entry name" value="NAD(P)-bd_dom_sf"/>
</dbReference>
<dbReference type="NCBIfam" id="TIGR01771">
    <property type="entry name" value="L-LDH-NAD"/>
    <property type="match status" value="1"/>
</dbReference>
<dbReference type="PANTHER" id="PTHR43128">
    <property type="entry name" value="L-2-HYDROXYCARBOXYLATE DEHYDROGENASE (NAD(P)(+))"/>
    <property type="match status" value="1"/>
</dbReference>
<dbReference type="PANTHER" id="PTHR43128:SF10">
    <property type="entry name" value="L-LACTATE DEHYDROGENASE A CHAIN"/>
    <property type="match status" value="1"/>
</dbReference>
<dbReference type="Pfam" id="PF02866">
    <property type="entry name" value="Ldh_1_C"/>
    <property type="match status" value="1"/>
</dbReference>
<dbReference type="Pfam" id="PF00056">
    <property type="entry name" value="Ldh_1_N"/>
    <property type="match status" value="1"/>
</dbReference>
<dbReference type="PIRSF" id="PIRSF000102">
    <property type="entry name" value="Lac_mal_DH"/>
    <property type="match status" value="1"/>
</dbReference>
<dbReference type="PRINTS" id="PR00086">
    <property type="entry name" value="LLDHDRGNASE"/>
</dbReference>
<dbReference type="SUPFAM" id="SSF56327">
    <property type="entry name" value="LDH C-terminal domain-like"/>
    <property type="match status" value="1"/>
</dbReference>
<dbReference type="SUPFAM" id="SSF51735">
    <property type="entry name" value="NAD(P)-binding Rossmann-fold domains"/>
    <property type="match status" value="1"/>
</dbReference>
<dbReference type="PROSITE" id="PS00064">
    <property type="entry name" value="L_LDH"/>
    <property type="match status" value="1"/>
</dbReference>
<gene>
    <name type="primary">ldha</name>
</gene>
<name>LDHA_SPHAG</name>
<protein>
    <recommendedName>
        <fullName>L-lactate dehydrogenase A chain</fullName>
        <shortName>LDH-A</shortName>
        <ecNumber evidence="2">1.1.1.27</ecNumber>
    </recommendedName>
</protein>
<evidence type="ECO:0000250" key="1"/>
<evidence type="ECO:0000250" key="2">
    <source>
        <dbReference type="UniProtKB" id="P00338"/>
    </source>
</evidence>
<evidence type="ECO:0000305" key="3"/>
<accession>O13276</accession>
<feature type="initiator methionine" description="Removed" evidence="1">
    <location>
        <position position="1"/>
    </location>
</feature>
<feature type="chain" id="PRO_0000168452" description="L-lactate dehydrogenase A chain">
    <location>
        <begin position="2"/>
        <end position="332"/>
    </location>
</feature>
<feature type="active site" description="Proton acceptor" evidence="1">
    <location>
        <position position="193"/>
    </location>
</feature>
<feature type="binding site" evidence="1">
    <location>
        <begin position="29"/>
        <end position="57"/>
    </location>
    <ligand>
        <name>NAD(+)</name>
        <dbReference type="ChEBI" id="CHEBI:57540"/>
    </ligand>
</feature>
<feature type="binding site" evidence="1">
    <location>
        <position position="99"/>
    </location>
    <ligand>
        <name>NAD(+)</name>
        <dbReference type="ChEBI" id="CHEBI:57540"/>
    </ligand>
</feature>
<feature type="binding site" evidence="1">
    <location>
        <position position="106"/>
    </location>
    <ligand>
        <name>substrate</name>
    </ligand>
</feature>
<feature type="binding site" evidence="1">
    <location>
        <position position="138"/>
    </location>
    <ligand>
        <name>NAD(+)</name>
        <dbReference type="ChEBI" id="CHEBI:57540"/>
    </ligand>
</feature>
<feature type="binding site" evidence="1">
    <location>
        <position position="138"/>
    </location>
    <ligand>
        <name>substrate</name>
    </ligand>
</feature>
<feature type="binding site" evidence="1">
    <location>
        <position position="169"/>
    </location>
    <ligand>
        <name>substrate</name>
    </ligand>
</feature>
<feature type="binding site" evidence="1">
    <location>
        <position position="248"/>
    </location>
    <ligand>
        <name>substrate</name>
    </ligand>
</feature>
<keyword id="KW-0963">Cytoplasm</keyword>
<keyword id="KW-0520">NAD</keyword>
<keyword id="KW-0560">Oxidoreductase</keyword>
<proteinExistence type="evidence at transcript level"/>